<accession>P0DKF5</accession>
<accession>A4GDQ9</accession>
<evidence type="ECO:0000250" key="1"/>
<evidence type="ECO:0000305" key="2"/>
<evidence type="ECO:0000305" key="3">
    <source>
    </source>
</evidence>
<comment type="function">
    <text evidence="1">Binds to actin and affects the structure of the cytoskeleton. At high concentrations, profilin prevents the polymerization of actin, whereas it enhances it at low concentrations (By similarity).</text>
</comment>
<comment type="subunit">
    <text evidence="1">Occurs in many kinds of cells as a complex with monomeric actin in a 1:1 ratio.</text>
</comment>
<comment type="subcellular location">
    <subcellularLocation>
        <location evidence="1">Cytoplasm</location>
        <location evidence="1">Cytoskeleton</location>
    </subcellularLocation>
</comment>
<comment type="PTM">
    <text evidence="1">Phosphorylated by MAP kinases.</text>
</comment>
<comment type="polymorphism">
    <text>Several isoforms of the allergen exist due to polymorphism.</text>
</comment>
<comment type="allergen">
    <text>Causes an allergic reaction in human.</text>
</comment>
<comment type="miscellaneous">
    <text evidence="3">The variability of the residues taking part of IgE-binding epitopes might be responsible of the difference in cross-reactivity among olive pollen cultivars, and between distantly related pollen species, leading to a variable range of allergy reactions among atopic patients.</text>
</comment>
<comment type="similarity">
    <text evidence="2">Belongs to the profilin family.</text>
</comment>
<sequence length="134" mass="14413">MSWQTYVDDHLMCDIEGHEGHRLTAAAIVGHDGSVWAQSATFPQFKPEEMNGIMTDFNEPGHLAPTGLHLGGTKYMVIQGEAGAVIRGKKGSGGITIKKTGQALVCGIYEEPVTPGQCNMVVERLGDYLLEQGL</sequence>
<feature type="initiator methionine" description="Removed" evidence="1">
    <location>
        <position position="1"/>
    </location>
</feature>
<feature type="chain" id="PRO_0000425005" description="Profilin-1">
    <location>
        <begin position="2"/>
        <end position="134"/>
    </location>
</feature>
<feature type="short sequence motif" description="Involved in PIP2 interaction">
    <location>
        <begin position="84"/>
        <end position="100"/>
    </location>
</feature>
<feature type="modified residue" description="Phosphothreonine" evidence="1">
    <location>
        <position position="114"/>
    </location>
</feature>
<feature type="disulfide bond" evidence="3">
    <location>
        <begin position="13"/>
        <end position="118"/>
    </location>
</feature>
<name>PROAN_OLEEU</name>
<dbReference type="EMBL" id="DQ138346">
    <property type="protein sequence ID" value="AAZ30424.1"/>
    <property type="molecule type" value="mRNA"/>
</dbReference>
<dbReference type="SMR" id="P0DKF5"/>
<dbReference type="GO" id="GO:0005938">
    <property type="term" value="C:cell cortex"/>
    <property type="evidence" value="ECO:0007669"/>
    <property type="project" value="TreeGrafter"/>
</dbReference>
<dbReference type="GO" id="GO:0005856">
    <property type="term" value="C:cytoskeleton"/>
    <property type="evidence" value="ECO:0007669"/>
    <property type="project" value="UniProtKB-SubCell"/>
</dbReference>
<dbReference type="GO" id="GO:0003785">
    <property type="term" value="F:actin monomer binding"/>
    <property type="evidence" value="ECO:0007669"/>
    <property type="project" value="TreeGrafter"/>
</dbReference>
<dbReference type="CDD" id="cd00148">
    <property type="entry name" value="PROF"/>
    <property type="match status" value="1"/>
</dbReference>
<dbReference type="FunFam" id="3.30.450.30:FF:000001">
    <property type="entry name" value="Profilin"/>
    <property type="match status" value="1"/>
</dbReference>
<dbReference type="Gene3D" id="3.30.450.30">
    <property type="entry name" value="Dynein light chain 2a, cytoplasmic"/>
    <property type="match status" value="1"/>
</dbReference>
<dbReference type="InterPro" id="IPR048278">
    <property type="entry name" value="PFN"/>
</dbReference>
<dbReference type="InterPro" id="IPR005455">
    <property type="entry name" value="PFN_euk"/>
</dbReference>
<dbReference type="InterPro" id="IPR036140">
    <property type="entry name" value="PFN_sf"/>
</dbReference>
<dbReference type="InterPro" id="IPR027310">
    <property type="entry name" value="Profilin_CS"/>
</dbReference>
<dbReference type="PANTHER" id="PTHR11604">
    <property type="entry name" value="PROFILIN"/>
    <property type="match status" value="1"/>
</dbReference>
<dbReference type="PANTHER" id="PTHR11604:SF25">
    <property type="entry name" value="PROFILIN-5"/>
    <property type="match status" value="1"/>
</dbReference>
<dbReference type="Pfam" id="PF00235">
    <property type="entry name" value="Profilin"/>
    <property type="match status" value="1"/>
</dbReference>
<dbReference type="PRINTS" id="PR00392">
    <property type="entry name" value="PROFILIN"/>
</dbReference>
<dbReference type="PRINTS" id="PR01640">
    <property type="entry name" value="PROFILINPLNT"/>
</dbReference>
<dbReference type="SMART" id="SM00392">
    <property type="entry name" value="PROF"/>
    <property type="match status" value="1"/>
</dbReference>
<dbReference type="SUPFAM" id="SSF55770">
    <property type="entry name" value="Profilin (actin-binding protein)"/>
    <property type="match status" value="1"/>
</dbReference>
<dbReference type="PROSITE" id="PS00414">
    <property type="entry name" value="PROFILIN"/>
    <property type="match status" value="1"/>
</dbReference>
<keyword id="KW-0009">Actin-binding</keyword>
<keyword id="KW-0020">Allergen</keyword>
<keyword id="KW-0963">Cytoplasm</keyword>
<keyword id="KW-0206">Cytoskeleton</keyword>
<keyword id="KW-1015">Disulfide bond</keyword>
<keyword id="KW-0597">Phosphoprotein</keyword>
<reference key="1">
    <citation type="journal article" date="2012" name="PLoS ONE">
        <title>Characterization of profilin polymorphism in pollen with a focus on multifunctionality.</title>
        <authorList>
            <person name="Jimenez-Lopez J.C."/>
            <person name="Morales S."/>
            <person name="Castro A.J."/>
            <person name="Volkmann D."/>
            <person name="Rodriguez-Garcia M.I."/>
            <person name="Alche Jde D."/>
        </authorList>
    </citation>
    <scope>NUCLEOTIDE SEQUENCE [MRNA]</scope>
    <scope>POLYMORPHISM</scope>
    <source>
        <strain>cv. Leccino</strain>
        <tissue>Pollen</tissue>
    </source>
</reference>
<reference key="2">
    <citation type="journal article" date="2013" name="PLoS ONE">
        <title>Analysis of the effects of polymorphism on pollen profilin structural functionality and the generation of conformational, T- and B-cell epitopes.</title>
        <authorList>
            <person name="Jimenez-Lopez J.C."/>
            <person name="Rodriguez-Garcia M.I."/>
            <person name="Alche J.D."/>
        </authorList>
    </citation>
    <scope>3D-STRUCTURE MODELING</scope>
    <scope>DISULFIDE BOND</scope>
</reference>
<organism>
    <name type="scientific">Olea europaea</name>
    <name type="common">Common olive</name>
    <dbReference type="NCBI Taxonomy" id="4146"/>
    <lineage>
        <taxon>Eukaryota</taxon>
        <taxon>Viridiplantae</taxon>
        <taxon>Streptophyta</taxon>
        <taxon>Embryophyta</taxon>
        <taxon>Tracheophyta</taxon>
        <taxon>Spermatophyta</taxon>
        <taxon>Magnoliopsida</taxon>
        <taxon>eudicotyledons</taxon>
        <taxon>Gunneridae</taxon>
        <taxon>Pentapetalae</taxon>
        <taxon>asterids</taxon>
        <taxon>lamiids</taxon>
        <taxon>Lamiales</taxon>
        <taxon>Oleaceae</taxon>
        <taxon>Oleeae</taxon>
        <taxon>Olea</taxon>
    </lineage>
</organism>
<proteinExistence type="evidence at protein level"/>
<protein>
    <recommendedName>
        <fullName>Profilin-1</fullName>
    </recommendedName>
    <alternativeName>
        <fullName>Pollen allergen Ole e 2</fullName>
    </alternativeName>
    <allergenName>Ole e 2</allergenName>
</protein>